<gene>
    <name type="ORF">LmjF28.1840</name>
    <name type="ORF">LmjF_28_1840</name>
</gene>
<keyword id="KW-0028">Amino-acid biosynthesis</keyword>
<keyword id="KW-0963">Cytoplasm</keyword>
<keyword id="KW-0456">Lyase</keyword>
<keyword id="KW-0479">Metal-binding</keyword>
<keyword id="KW-0486">Methionine biosynthesis</keyword>
<keyword id="KW-1185">Reference proteome</keyword>
<keyword id="KW-0862">Zinc</keyword>
<reference key="1">
    <citation type="journal article" date="2005" name="Science">
        <title>The genome of the kinetoplastid parasite, Leishmania major.</title>
        <authorList>
            <person name="Ivens A.C."/>
            <person name="Peacock C.S."/>
            <person name="Worthey E.A."/>
            <person name="Murphy L."/>
            <person name="Aggarwal G."/>
            <person name="Berriman M."/>
            <person name="Sisk E."/>
            <person name="Rajandream M.A."/>
            <person name="Adlem E."/>
            <person name="Aert R."/>
            <person name="Anupama A."/>
            <person name="Apostolou Z."/>
            <person name="Attipoe P."/>
            <person name="Bason N."/>
            <person name="Bauser C."/>
            <person name="Beck A."/>
            <person name="Beverley S.M."/>
            <person name="Bianchettin G."/>
            <person name="Borzym K."/>
            <person name="Bothe G."/>
            <person name="Bruschi C.V."/>
            <person name="Collins M."/>
            <person name="Cadag E."/>
            <person name="Ciarloni L."/>
            <person name="Clayton C."/>
            <person name="Coulson R.M.R."/>
            <person name="Cronin A."/>
            <person name="Cruz A.K."/>
            <person name="Davies R.M."/>
            <person name="De Gaudenzi J."/>
            <person name="Dobson D.E."/>
            <person name="Duesterhoeft A."/>
            <person name="Fazelina G."/>
            <person name="Fosker N."/>
            <person name="Frasch A.C."/>
            <person name="Fraser A."/>
            <person name="Fuchs M."/>
            <person name="Gabel C."/>
            <person name="Goble A."/>
            <person name="Goffeau A."/>
            <person name="Harris D."/>
            <person name="Hertz-Fowler C."/>
            <person name="Hilbert H."/>
            <person name="Horn D."/>
            <person name="Huang Y."/>
            <person name="Klages S."/>
            <person name="Knights A."/>
            <person name="Kube M."/>
            <person name="Larke N."/>
            <person name="Litvin L."/>
            <person name="Lord A."/>
            <person name="Louie T."/>
            <person name="Marra M."/>
            <person name="Masuy D."/>
            <person name="Matthews K."/>
            <person name="Michaeli S."/>
            <person name="Mottram J.C."/>
            <person name="Mueller-Auer S."/>
            <person name="Munden H."/>
            <person name="Nelson S."/>
            <person name="Norbertczak H."/>
            <person name="Oliver K."/>
            <person name="O'neil S."/>
            <person name="Pentony M."/>
            <person name="Pohl T.M."/>
            <person name="Price C."/>
            <person name="Purnelle B."/>
            <person name="Quail M.A."/>
            <person name="Rabbinowitsch E."/>
            <person name="Reinhardt R."/>
            <person name="Rieger M."/>
            <person name="Rinta J."/>
            <person name="Robben J."/>
            <person name="Robertson L."/>
            <person name="Ruiz J.C."/>
            <person name="Rutter S."/>
            <person name="Saunders D."/>
            <person name="Schaefer M."/>
            <person name="Schein J."/>
            <person name="Schwartz D.C."/>
            <person name="Seeger K."/>
            <person name="Seyler A."/>
            <person name="Sharp S."/>
            <person name="Shin H."/>
            <person name="Sivam D."/>
            <person name="Squares R."/>
            <person name="Squares S."/>
            <person name="Tosato V."/>
            <person name="Vogt C."/>
            <person name="Volckaert G."/>
            <person name="Wambutt R."/>
            <person name="Warren T."/>
            <person name="Wedler H."/>
            <person name="Woodward J."/>
            <person name="Zhou S."/>
            <person name="Zimmermann W."/>
            <person name="Smith D.F."/>
            <person name="Blackwell J.M."/>
            <person name="Stuart K.D."/>
            <person name="Barrell B.G."/>
            <person name="Myler P.J."/>
        </authorList>
    </citation>
    <scope>NUCLEOTIDE SEQUENCE [LARGE SCALE GENOMIC DNA]</scope>
    <source>
        <strain>MHOM/IL/81/Friedlin</strain>
    </source>
</reference>
<protein>
    <recommendedName>
        <fullName evidence="1">Probable methylthioribulose-1-phosphate dehydratase</fullName>
        <shortName evidence="1">MTRu-1-P dehydratase</shortName>
        <ecNumber evidence="1">4.2.1.109</ecNumber>
    </recommendedName>
</protein>
<feature type="chain" id="PRO_0000393798" description="Probable methylthioribulose-1-phosphate dehydratase">
    <location>
        <begin position="1"/>
        <end position="239"/>
    </location>
</feature>
<feature type="active site" description="Proton donor/acceptor" evidence="1">
    <location>
        <position position="141"/>
    </location>
</feature>
<feature type="binding site" evidence="1">
    <location>
        <position position="100"/>
    </location>
    <ligand>
        <name>substrate</name>
    </ligand>
</feature>
<feature type="binding site" evidence="1">
    <location>
        <position position="118"/>
    </location>
    <ligand>
        <name>Zn(2+)</name>
        <dbReference type="ChEBI" id="CHEBI:29105"/>
    </ligand>
</feature>
<feature type="binding site" evidence="1">
    <location>
        <position position="120"/>
    </location>
    <ligand>
        <name>Zn(2+)</name>
        <dbReference type="ChEBI" id="CHEBI:29105"/>
    </ligand>
</feature>
<feature type="binding site" evidence="1">
    <location>
        <position position="197"/>
    </location>
    <ligand>
        <name>Zn(2+)</name>
        <dbReference type="ChEBI" id="CHEBI:29105"/>
    </ligand>
</feature>
<proteinExistence type="inferred from homology"/>
<organism>
    <name type="scientific">Leishmania major</name>
    <dbReference type="NCBI Taxonomy" id="5664"/>
    <lineage>
        <taxon>Eukaryota</taxon>
        <taxon>Discoba</taxon>
        <taxon>Euglenozoa</taxon>
        <taxon>Kinetoplastea</taxon>
        <taxon>Metakinetoplastina</taxon>
        <taxon>Trypanosomatida</taxon>
        <taxon>Trypanosomatidae</taxon>
        <taxon>Leishmaniinae</taxon>
        <taxon>Leishmania</taxon>
    </lineage>
</organism>
<sequence>MDTLTHLSHTLREAMSDIVPESHPEHPFNLIPELCRKFYDLGWATGTGGGISIKMGENYYIAPSGVQKERIKPNEIFVLNASQDVVEEPRTEKQLKISECTPLFFNAYRMRGAGACLHTHSANCVLISLLCDREFRISHIEMIKGIINNETKKALGFRDTLVIPIIENTDFERDLTASMAECMERYPESCAVLVRRHGMYVWSDTWQKAKGAVECIDYLMGLAIRMRTLGLEWEPKDVK</sequence>
<name>MTNB_LEIMA</name>
<evidence type="ECO:0000255" key="1">
    <source>
        <dbReference type="HAMAP-Rule" id="MF_03116"/>
    </source>
</evidence>
<dbReference type="EC" id="4.2.1.109" evidence="1"/>
<dbReference type="EMBL" id="FR796424">
    <property type="protein sequence ID" value="CAJ05557.1"/>
    <property type="molecule type" value="Genomic_DNA"/>
</dbReference>
<dbReference type="RefSeq" id="XP_001684466.1">
    <property type="nucleotide sequence ID" value="XM_001684414.1"/>
</dbReference>
<dbReference type="SMR" id="Q4Q882"/>
<dbReference type="FunCoup" id="Q4Q882">
    <property type="interactions" value="175"/>
</dbReference>
<dbReference type="STRING" id="5664.Q4Q882"/>
<dbReference type="EnsemblProtists" id="CAJ05557">
    <property type="protein sequence ID" value="CAJ05557"/>
    <property type="gene ID" value="LMJF_28_1840"/>
</dbReference>
<dbReference type="GeneID" id="5653395"/>
<dbReference type="KEGG" id="lma:LMJF_28_1840"/>
<dbReference type="VEuPathDB" id="TriTrypDB:LmjF.28.1840"/>
<dbReference type="VEuPathDB" id="TriTrypDB:LMJFC_280027200"/>
<dbReference type="VEuPathDB" id="TriTrypDB:LMJLV39_280026200"/>
<dbReference type="VEuPathDB" id="TriTrypDB:LMJSD75_280025700"/>
<dbReference type="eggNOG" id="KOG2631">
    <property type="taxonomic scope" value="Eukaryota"/>
</dbReference>
<dbReference type="InParanoid" id="Q4Q882"/>
<dbReference type="OMA" id="WFPGTSG"/>
<dbReference type="UniPathway" id="UPA00904">
    <property type="reaction ID" value="UER00875"/>
</dbReference>
<dbReference type="Proteomes" id="UP000000542">
    <property type="component" value="Chromosome 28"/>
</dbReference>
<dbReference type="GO" id="GO:0005737">
    <property type="term" value="C:cytoplasm"/>
    <property type="evidence" value="ECO:0000318"/>
    <property type="project" value="GO_Central"/>
</dbReference>
<dbReference type="GO" id="GO:0046570">
    <property type="term" value="F:methylthioribulose 1-phosphate dehydratase activity"/>
    <property type="evidence" value="ECO:0000318"/>
    <property type="project" value="GO_Central"/>
</dbReference>
<dbReference type="GO" id="GO:0008270">
    <property type="term" value="F:zinc ion binding"/>
    <property type="evidence" value="ECO:0007669"/>
    <property type="project" value="UniProtKB-UniRule"/>
</dbReference>
<dbReference type="GO" id="GO:0019509">
    <property type="term" value="P:L-methionine salvage from methylthioadenosine"/>
    <property type="evidence" value="ECO:0000318"/>
    <property type="project" value="GO_Central"/>
</dbReference>
<dbReference type="FunFam" id="3.40.225.10:FF:000003">
    <property type="entry name" value="Methylthioribulose-1-phosphate dehydratase"/>
    <property type="match status" value="1"/>
</dbReference>
<dbReference type="Gene3D" id="3.40.225.10">
    <property type="entry name" value="Class II aldolase/adducin N-terminal domain"/>
    <property type="match status" value="1"/>
</dbReference>
<dbReference type="HAMAP" id="MF_03116">
    <property type="entry name" value="Salvage_MtnB_euk"/>
    <property type="match status" value="1"/>
</dbReference>
<dbReference type="InterPro" id="IPR001303">
    <property type="entry name" value="Aldolase_II/adducin_N"/>
</dbReference>
<dbReference type="InterPro" id="IPR036409">
    <property type="entry name" value="Aldolase_II/adducin_N_sf"/>
</dbReference>
<dbReference type="InterPro" id="IPR017714">
    <property type="entry name" value="MethylthioRu-1-P_deHdtase_MtnB"/>
</dbReference>
<dbReference type="InterPro" id="IPR027514">
    <property type="entry name" value="Salvage_MtnB_euk"/>
</dbReference>
<dbReference type="NCBIfam" id="TIGR03328">
    <property type="entry name" value="salvage_mtnB"/>
    <property type="match status" value="1"/>
</dbReference>
<dbReference type="PANTHER" id="PTHR10640">
    <property type="entry name" value="METHYLTHIORIBULOSE-1-PHOSPHATE DEHYDRATASE"/>
    <property type="match status" value="1"/>
</dbReference>
<dbReference type="PANTHER" id="PTHR10640:SF7">
    <property type="entry name" value="METHYLTHIORIBULOSE-1-PHOSPHATE DEHYDRATASE"/>
    <property type="match status" value="1"/>
</dbReference>
<dbReference type="Pfam" id="PF00596">
    <property type="entry name" value="Aldolase_II"/>
    <property type="match status" value="1"/>
</dbReference>
<dbReference type="SMART" id="SM01007">
    <property type="entry name" value="Aldolase_II"/>
    <property type="match status" value="1"/>
</dbReference>
<dbReference type="SUPFAM" id="SSF53639">
    <property type="entry name" value="AraD/HMP-PK domain-like"/>
    <property type="match status" value="1"/>
</dbReference>
<comment type="function">
    <text evidence="1">Catalyzes the dehydration of methylthioribulose-1-phosphate (MTRu-1-P) into 2,3-diketo-5-methylthiopentyl-1-phosphate (DK-MTP-1-P).</text>
</comment>
<comment type="catalytic activity">
    <reaction evidence="1">
        <text>5-(methylsulfanyl)-D-ribulose 1-phosphate = 5-methylsulfanyl-2,3-dioxopentyl phosphate + H2O</text>
        <dbReference type="Rhea" id="RHEA:15549"/>
        <dbReference type="ChEBI" id="CHEBI:15377"/>
        <dbReference type="ChEBI" id="CHEBI:58548"/>
        <dbReference type="ChEBI" id="CHEBI:58828"/>
        <dbReference type="EC" id="4.2.1.109"/>
    </reaction>
</comment>
<comment type="cofactor">
    <cofactor evidence="1">
        <name>Zn(2+)</name>
        <dbReference type="ChEBI" id="CHEBI:29105"/>
    </cofactor>
    <text evidence="1">Binds 1 zinc ion per subunit.</text>
</comment>
<comment type="pathway">
    <text evidence="1">Amino-acid biosynthesis; L-methionine biosynthesis via salvage pathway; L-methionine from S-methyl-5-thio-alpha-D-ribose 1-phosphate: step 2/6.</text>
</comment>
<comment type="subcellular location">
    <subcellularLocation>
        <location evidence="1">Cytoplasm</location>
    </subcellularLocation>
</comment>
<comment type="similarity">
    <text evidence="1">Belongs to the aldolase class II family. MtnB subfamily.</text>
</comment>
<accession>Q4Q882</accession>